<dbReference type="EMBL" id="AE004091">
    <property type="protein sequence ID" value="AAG05342.1"/>
    <property type="molecule type" value="Genomic_DNA"/>
</dbReference>
<dbReference type="PIR" id="A83401">
    <property type="entry name" value="A83401"/>
</dbReference>
<dbReference type="RefSeq" id="NP_250644.1">
    <property type="nucleotide sequence ID" value="NC_002516.2"/>
</dbReference>
<dbReference type="RefSeq" id="WP_003113480.1">
    <property type="nucleotide sequence ID" value="NZ_QZGE01000030.1"/>
</dbReference>
<dbReference type="STRING" id="208964.PA1954"/>
<dbReference type="PaxDb" id="208964-PA1954"/>
<dbReference type="DNASU" id="880832"/>
<dbReference type="GeneID" id="880832"/>
<dbReference type="KEGG" id="pae:PA1954"/>
<dbReference type="PATRIC" id="fig|208964.12.peg.2036"/>
<dbReference type="PseudoCAP" id="PA1954"/>
<dbReference type="HOGENOM" id="CLU_052348_0_0_6"/>
<dbReference type="InParanoid" id="Q9I2F0"/>
<dbReference type="OrthoDB" id="7024182at2"/>
<dbReference type="BioCyc" id="PAER208964:G1FZ6-1992-MONOMER"/>
<dbReference type="Proteomes" id="UP000002438">
    <property type="component" value="Chromosome"/>
</dbReference>
<dbReference type="GO" id="GO:0005576">
    <property type="term" value="C:extracellular region"/>
    <property type="evidence" value="ECO:0007669"/>
    <property type="project" value="UniProtKB-SubCell"/>
</dbReference>
<dbReference type="GO" id="GO:0009289">
    <property type="term" value="C:pilus"/>
    <property type="evidence" value="ECO:0007669"/>
    <property type="project" value="UniProtKB-SubCell"/>
</dbReference>
<dbReference type="GO" id="GO:1990000">
    <property type="term" value="P:amyloid fibril formation"/>
    <property type="evidence" value="ECO:0000315"/>
    <property type="project" value="PseudoCAP"/>
</dbReference>
<dbReference type="GO" id="GO:0007155">
    <property type="term" value="P:cell adhesion"/>
    <property type="evidence" value="ECO:0007669"/>
    <property type="project" value="UniProtKB-KW"/>
</dbReference>
<proteinExistence type="evidence at protein level"/>
<reference evidence="7" key="1">
    <citation type="journal article" date="2000" name="Nature">
        <title>Complete genome sequence of Pseudomonas aeruginosa PAO1, an opportunistic pathogen.</title>
        <authorList>
            <person name="Stover C.K."/>
            <person name="Pham X.-Q.T."/>
            <person name="Erwin A.L."/>
            <person name="Mizoguchi S.D."/>
            <person name="Warrener P."/>
            <person name="Hickey M.J."/>
            <person name="Brinkman F.S.L."/>
            <person name="Hufnagle W.O."/>
            <person name="Kowalik D.J."/>
            <person name="Lagrou M."/>
            <person name="Garber R.L."/>
            <person name="Goltry L."/>
            <person name="Tolentino E."/>
            <person name="Westbrock-Wadman S."/>
            <person name="Yuan Y."/>
            <person name="Brody L.L."/>
            <person name="Coulter S.N."/>
            <person name="Folger K.R."/>
            <person name="Kas A."/>
            <person name="Larbig K."/>
            <person name="Lim R.M."/>
            <person name="Smith K.A."/>
            <person name="Spencer D.H."/>
            <person name="Wong G.K.-S."/>
            <person name="Wu Z."/>
            <person name="Paulsen I.T."/>
            <person name="Reizer J."/>
            <person name="Saier M.H. Jr."/>
            <person name="Hancock R.E.W."/>
            <person name="Lory S."/>
            <person name="Olson M.V."/>
        </authorList>
    </citation>
    <scope>NUCLEOTIDE SEQUENCE [LARGE SCALE GENOMIC DNA]</scope>
    <source>
        <strain>ATCC 15692 / DSM 22644 / CIP 104116 / JCM 14847 / LMG 12228 / 1C / PRS 101 / PAO1</strain>
    </source>
</reference>
<reference key="2">
    <citation type="journal article" date="2013" name="MicrobiologyOpen">
        <title>Expression of Fap amyloids in Pseudomonas aeruginosa, P. fluorescens, and P. putida results in aggregation and increased biofilm formation.</title>
        <authorList>
            <person name="Dueholm M.S."/>
            <person name="Soendergaard M.T."/>
            <person name="Nilsson M."/>
            <person name="Christiansen G."/>
            <person name="Stensballe A."/>
            <person name="Overgaard M.T."/>
            <person name="Givskov M."/>
            <person name="Tolker-Nielsen T."/>
            <person name="Otzen D.E."/>
            <person name="Nielsen P.H."/>
        </authorList>
    </citation>
    <scope>FUNCTION</scope>
    <scope>SUBUNIT</scope>
    <scope>SUBCELLULAR LOCATION</scope>
    <scope>REPEATS</scope>
    <scope>MOTIF</scope>
    <scope>DISRUPTION PHENOTYPE</scope>
    <source>
        <strain>ATCC 15692 / DSM 22644 / CIP 104116 / JCM 14847 / LMG 12228 / 1C / PRS 101 / PAO1</strain>
    </source>
</reference>
<sequence>MKATMVLTPLALAMAAVLSVSAYAGNEGGWHPPKPNPQSNNKGGATALVVDTQQNYNNKVSNFGTLNNASVSGSIKDASGNVGVNVAAGDNNQQANAAALASADASFVFGTATASTSVLQSGYGNTLNNYSNPNTASLSNSANNVSGNLGVNVAAGNFNQQKNDLAAAVSNGQYSTAGSAASQTSTGNTTVNSANYAYGGTYVSLKLNADGSYKGTSDQIGDVYLDTWEGQTHPGGSNTGHIDVDSQAQGAKDLNHDGGAFAFKEKGDVDLKGTVSGFIPAIVGFKTPVTNNASLSNSLQNVSGNVGVNIAAGGGNQQSNSLSIAAGCSSCPAGGESLGF</sequence>
<organism>
    <name type="scientific">Pseudomonas aeruginosa (strain ATCC 15692 / DSM 22644 / CIP 104116 / JCM 14847 / LMG 12228 / 1C / PRS 101 / PAO1)</name>
    <dbReference type="NCBI Taxonomy" id="208964"/>
    <lineage>
        <taxon>Bacteria</taxon>
        <taxon>Pseudomonadati</taxon>
        <taxon>Pseudomonadota</taxon>
        <taxon>Gammaproteobacteria</taxon>
        <taxon>Pseudomonadales</taxon>
        <taxon>Pseudomonadaceae</taxon>
        <taxon>Pseudomonas</taxon>
    </lineage>
</organism>
<evidence type="ECO:0000250" key="1">
    <source>
        <dbReference type="UniProtKB" id="P0DXF5"/>
    </source>
</evidence>
<evidence type="ECO:0000255" key="2"/>
<evidence type="ECO:0000269" key="3">
    <source>
    </source>
</evidence>
<evidence type="ECO:0000303" key="4">
    <source>
    </source>
</evidence>
<evidence type="ECO:0000305" key="5"/>
<evidence type="ECO:0000305" key="6">
    <source>
    </source>
</evidence>
<evidence type="ECO:0000312" key="7">
    <source>
        <dbReference type="EMBL" id="AAG05342.1"/>
    </source>
</evidence>
<feature type="signal peptide" evidence="2">
    <location>
        <begin position="1"/>
        <end position="24"/>
    </location>
</feature>
<feature type="chain" id="PRO_5004327016" description="Functional amyloid subunit FapC" evidence="2">
    <location>
        <begin position="25"/>
        <end position="340"/>
    </location>
</feature>
<feature type="repeat" description="FapC_R1" evidence="1">
    <location>
        <begin position="67"/>
        <end position="100"/>
    </location>
</feature>
<feature type="repeat" description="FapC_R2" evidence="1">
    <location>
        <begin position="134"/>
        <end position="167"/>
    </location>
</feature>
<feature type="repeat" description="FapC_R3" evidence="1">
    <location>
        <begin position="291"/>
        <end position="324"/>
    </location>
</feature>
<feature type="region of interest" description="Linker 1" evidence="1">
    <location>
        <begin position="101"/>
        <end position="133"/>
    </location>
</feature>
<feature type="region of interest" description="Linker 2" evidence="1">
    <location>
        <begin position="168"/>
        <end position="290"/>
    </location>
</feature>
<feature type="short sequence motif" description="Cys-X-X-Cys" evidence="6">
    <location>
        <begin position="328"/>
        <end position="331"/>
    </location>
</feature>
<name>FAPC_PSEAE</name>
<keyword id="KW-0034">Amyloid</keyword>
<keyword id="KW-0130">Cell adhesion</keyword>
<keyword id="KW-0281">Fimbrium</keyword>
<keyword id="KW-1185">Reference proteome</keyword>
<keyword id="KW-0677">Repeat</keyword>
<keyword id="KW-0964">Secreted</keyword>
<keyword id="KW-0732">Signal</keyword>
<comment type="function">
    <text evidence="3">The major functional amyloid subunit in this bacterium. Upon overexpression of the endogenous six-gene locus (fapA-fapF), cells form large clumps during liquid growth, make large amounts of biofilm and produce amyloid fibrils.</text>
</comment>
<comment type="subunit">
    <text evidence="1 3">The major component of purified amyloid fibrils (PubMed:23504942). Fibrils are resistant to boiling in 2% (weight/vol) SDS and require &gt;90% (vol/vol) formic acid to dissolve (PubMed:23504942). Interacts with FapA in vitro (By similarity).</text>
</comment>
<comment type="subcellular location">
    <subcellularLocation>
        <location evidence="3">Fimbrium</location>
    </subcellularLocation>
    <subcellularLocation>
        <location evidence="3">Secreted</location>
    </subcellularLocation>
    <text evidence="3">Part of an extracellular amyloid fibril.</text>
</comment>
<comment type="disruption phenotype">
    <text evidence="3">Deletion of the entire fapA-fapF six-gene locus shows no visible growth phenotype.</text>
</comment>
<comment type="similarity">
    <text evidence="5">Belongs to the FapB/FapC family.</text>
</comment>
<protein>
    <recommendedName>
        <fullName evidence="5">Functional amyloid subunit FapC</fullName>
    </recommendedName>
    <alternativeName>
        <fullName evidence="4">Amyloid-like fimbrin subunit FapC</fullName>
        <shortName evidence="4">ALF subunit FapC</shortName>
    </alternativeName>
    <alternativeName>
        <fullName evidence="5">Fibril amyloid subunit FapC</fullName>
    </alternativeName>
</protein>
<accession>Q9I2F0</accession>
<gene>
    <name evidence="4" type="primary">fapC</name>
    <name evidence="7" type="ordered locus">PA1954</name>
</gene>